<protein>
    <recommendedName>
        <fullName evidence="1">Protein Nef</fullName>
    </recommendedName>
    <alternativeName>
        <fullName evidence="1">3'ORF</fullName>
    </alternativeName>
    <alternativeName>
        <fullName evidence="1">Negative factor</fullName>
        <shortName evidence="1">F-protein</shortName>
    </alternativeName>
    <component>
        <recommendedName>
            <fullName evidence="1">C-terminal core protein</fullName>
        </recommendedName>
    </component>
</protein>
<proteinExistence type="evidence at protein level"/>
<organismHost>
    <name type="scientific">Homo sapiens</name>
    <name type="common">Human</name>
    <dbReference type="NCBI Taxonomy" id="9606"/>
</organismHost>
<organism>
    <name type="scientific">Human immunodeficiency virus type 1 group M subtype B (isolate PCV12)</name>
    <name type="common">HIV-1</name>
    <dbReference type="NCBI Taxonomy" id="11679"/>
    <lineage>
        <taxon>Viruses</taxon>
        <taxon>Riboviria</taxon>
        <taxon>Pararnavirae</taxon>
        <taxon>Artverviricota</taxon>
        <taxon>Revtraviricetes</taxon>
        <taxon>Ortervirales</taxon>
        <taxon>Retroviridae</taxon>
        <taxon>Orthoretrovirinae</taxon>
        <taxon>Lentivirus</taxon>
        <taxon>Human immunodeficiency virus type 1</taxon>
    </lineage>
</organism>
<keyword id="KW-0002">3D-structure</keyword>
<keyword id="KW-0014">AIDS</keyword>
<keyword id="KW-0053">Apoptosis</keyword>
<keyword id="KW-0244">Early protein</keyword>
<keyword id="KW-1032">Host cell membrane</keyword>
<keyword id="KW-1040">Host Golgi apparatus</keyword>
<keyword id="KW-1043">Host membrane</keyword>
<keyword id="KW-0945">Host-virus interaction</keyword>
<keyword id="KW-1080">Inhibition of host adaptive immune response by virus</keyword>
<keyword id="KW-1083">Inhibition of host autophagy by virus</keyword>
<keyword id="KW-1115">Inhibition of host MHC class I molecule presentation by virus</keyword>
<keyword id="KW-1116">Inhibition of host MHC class II molecule presentation by virus</keyword>
<keyword id="KW-0449">Lipoprotein</keyword>
<keyword id="KW-0472">Membrane</keyword>
<keyword id="KW-0519">Myristate</keyword>
<keyword id="KW-0597">Phosphoprotein</keyword>
<keyword id="KW-0964">Secreted</keyword>
<keyword id="KW-0729">SH3-binding</keyword>
<keyword id="KW-0899">Viral immunoevasion</keyword>
<keyword id="KW-0946">Virion</keyword>
<keyword id="KW-0843">Virulence</keyword>
<comment type="function">
    <text evidence="1">Factor of infectivity and pathogenicity, required for optimal virus replication. Alters numerous pathways of T-lymphocyte function and down-regulates immunity surface molecules in order to evade host defense and increase viral infectivity. Alters the functionality of other immunity cells, like dendritic cells, monocytes/macrophages and NK cells.</text>
</comment>
<comment type="function">
    <text evidence="1">In infected CD4(+) T-lymphocytes, down-regulates the surface MHC-I, mature MHC-II, CD4, CD28, CCR5 and CXCR4 molecules. Mediates internalization and degradation of host CD4 through the interaction of with the cytoplasmic tail of CD4, the recruitment of AP-2 (clathrin adapter protein complex 2), internalization through clathrin coated pits, and subsequent transport to endosomes and lysosomes for degradation. Diverts host MHC-I molecules to the trans-Golgi network-associated endosomal compartments by an endocytic pathway to finally target them for degradation. MHC-I down-regulation may involve AP-1 (clathrin adapter protein complex 1) or possibly Src family kinase-ZAP70/Syk-PI3K cascade recruited by PACS2. In consequence infected cells are masked for immune recognition by cytotoxic T-lymphocytes. Decreasing the number of immune receptors also prevents reinfection by more HIV particles (superinfection). Down-regulates host SERINC3 and SERINC5 thereby excluding these proteins from the viral particles. Virion infectivity is drastically higher when SERINC3 or SERINC5 are excluded from the viral envelope, because these host antiviral proteins impair the membrane fusion event necessary for subsequent virion penetration.</text>
</comment>
<comment type="function">
    <text evidence="1">Bypasses host T-cell signaling by inducing a transcriptional program nearly identical to that of anti-CD3 cell activation. Interaction with TCR-zeta chain up-regulates the Fas ligand (FasL). Increasing surface FasL molecules and decreasing surface MHC-I molecules on infected CD4(+) cells send attacking cytotoxic CD8+ T-lymphocytes into apoptosis.</text>
</comment>
<comment type="function">
    <text evidence="1">Plays a role in optimizing the host cell environment for viral replication without causing cell death by apoptosis. Protects the infected cells from apoptosis in order to keep them alive until the next virus generation is ready to strike. Inhibits the Fas and TNFR-mediated death signals by blocking MAP3K5/ASK1. Decreases the half-life of TP53, protecting the infected cell against p53-mediated apoptosis. Inhibits the apoptotic signals regulated by the Bcl-2 family proteins through the formation of a Nef/PI3-kinase/PAK2 complex that leads to activation of PAK2 and induces phosphorylation of host BAD.</text>
</comment>
<comment type="function">
    <text evidence="1">Extracellular Nef protein targets CD4(+) T-lymphocytes for apoptosis by interacting with CXCR4 surface receptors.</text>
</comment>
<comment type="subunit">
    <text evidence="1">Monomer; cytosolic form. Homodimer; membrane bound form. Interacts with Nef associated p21-activated kinase (PAK2); this interaction activates PAK2. Associates with the Nef-MHC-I-AP1 complex; this complex is required for MHC-I internalization. Interacts (via C-terminus) with host PI3-kinase. Interacts with host PACS1; this interaction seems to be weak. Interacts with host PACS2. Interacts with host LCK and MAPK3; these interactions inhibit the kinase activity of the latter. Interacts with host ATP6V1H; this interaction may play a role in CD4 endocytosis. Associates with the CD4-Nef-AP2 complex; this complex is required for CD4 internalization. Interacts with host AP2 subunit alpha and AP2 subunit sigma2. Interacts with TCR-zeta chain; this interaction up-regulates the Fas ligand (FasL) surface expression. Interacts with host HCK, LYN, and SRC; these interactions activate the Src family kinases. Interacts with MAP3K5; this interaction inhibits the Fas and TNFR-mediated death signals. Interacts with beta-COP and PTE1. Interacts with human RACK1; this increases Nef phosphorylation by PKC. Interacts with TP53; this interaction decreases the half-life of TP53, protecting the infected cell against p53-mediated apoptosis.</text>
</comment>
<comment type="subcellular location">
    <subcellularLocation>
        <location evidence="1">Host cell membrane</location>
        <topology evidence="1">Lipid-anchor</topology>
        <orientation evidence="1">Cytoplasmic side</orientation>
    </subcellularLocation>
    <subcellularLocation>
        <location evidence="1">Virion</location>
    </subcellularLocation>
    <subcellularLocation>
        <location evidence="1">Secreted</location>
    </subcellularLocation>
    <subcellularLocation>
        <location evidence="1">Host Golgi apparatus membrane</location>
    </subcellularLocation>
    <text evidence="1">TGN localization requires PACS1. Associates with the inner plasma membrane through its N-terminal domain. Nef stimulates its own export via the release of exosomes. Incorporated in virions at a rate of about 10 molecules per virion, where it is cleaved.</text>
</comment>
<comment type="induction">
    <text evidence="1">Expressed early in the viral replication cycle.</text>
</comment>
<comment type="domain">
    <text evidence="1">The N-terminal domain is composed of the N-myristoyl glycine and of a cluster of positively charged amino acids. It is required for inner plasma membrane targeting of Nef and virion incorporation, and thereby for infectivity. This domain is also involved in binding to TP53.</text>
</comment>
<comment type="domain">
    <text evidence="1">The SH3-binding domain constituted of PxxP motifs mediates binding to several Src family proteins thereby regulating their tyrosine kinase activity. The same motifs also mediates the association with MAPK3, PI3-kinase and TCR-zeta.</text>
</comment>
<comment type="domain">
    <text evidence="1">The dileucine internalization motif and a diacidic motif seem to be required for binding to AP-2.</text>
</comment>
<comment type="domain">
    <text evidence="1">The acidic region binds to the sorting protein PACS-2, which targets Nef to the paranuclear region, enabling the PxxP motif to direct assembly of an SFK/ZAP-70/PI3K complex that accelerates endocytosis of cell-surface MHC-I.</text>
</comment>
<comment type="PTM">
    <text evidence="1">The virion-associated Nef proteins are cleaved by the viral protease to release the soluble C-terminal core protein. Nef is probably cleaved concomitantly with viral structural proteins on maturation of virus particles.</text>
</comment>
<comment type="PTM">
    <text evidence="1">Myristoylated.</text>
</comment>
<comment type="PTM">
    <text evidence="1">Phosphorylated on serine residues, probably by host PKCdelta and theta.</text>
</comment>
<comment type="miscellaneous">
    <text evidence="1">HIV-1 lineages are divided in three main groups, M (for Major), O (for Outlier), and N (for New, or Non-M, Non-O). The vast majority of strains found worldwide belong to the group M. Group O seems to be endemic to and largely confined to Cameroon and neighboring countries in West Central Africa, where these viruses represent a small minority of HIV-1 strains. The group N is represented by a limited number of isolates from Cameroonian persons. The group M is further subdivided in 9 clades or subtypes (A to D, F to H, J and K).</text>
</comment>
<comment type="similarity">
    <text evidence="1">Belongs to the lentivirus primate group Nef protein family.</text>
</comment>
<accession>P04324</accession>
<gene>
    <name evidence="1" type="primary">nef</name>
</gene>
<dbReference type="EMBL" id="M11840">
    <property type="protein sequence ID" value="AAA45001.1"/>
    <property type="molecule type" value="Genomic_RNA"/>
</dbReference>
<dbReference type="PIR" id="A04006">
    <property type="entry name" value="ASLJ12"/>
</dbReference>
<dbReference type="PDB" id="1QA4">
    <property type="method" value="NMR"/>
    <property type="chains" value="A=2-57"/>
</dbReference>
<dbReference type="PDB" id="1QA5">
    <property type="method" value="NMR"/>
    <property type="chains" value="A=2-57"/>
</dbReference>
<dbReference type="PDB" id="1ZEC">
    <property type="method" value="NMR"/>
    <property type="chains" value="A=2-26"/>
</dbReference>
<dbReference type="PDBsum" id="1QA4"/>
<dbReference type="PDBsum" id="1QA5"/>
<dbReference type="PDBsum" id="1ZEC"/>
<dbReference type="BMRB" id="P04324"/>
<dbReference type="SMR" id="P04324"/>
<dbReference type="MINT" id="P04324"/>
<dbReference type="DrugBank" id="DB08231">
    <property type="generic name" value="Myristic acid"/>
</dbReference>
<dbReference type="EvolutionaryTrace" id="P04324"/>
<dbReference type="GO" id="GO:0005576">
    <property type="term" value="C:extracellular region"/>
    <property type="evidence" value="ECO:0007669"/>
    <property type="project" value="UniProtKB-SubCell"/>
</dbReference>
<dbReference type="GO" id="GO:0044178">
    <property type="term" value="C:host cell Golgi membrane"/>
    <property type="evidence" value="ECO:0007669"/>
    <property type="project" value="UniProtKB-SubCell"/>
</dbReference>
<dbReference type="GO" id="GO:0020002">
    <property type="term" value="C:host cell plasma membrane"/>
    <property type="evidence" value="ECO:0007669"/>
    <property type="project" value="UniProtKB-SubCell"/>
</dbReference>
<dbReference type="GO" id="GO:0016020">
    <property type="term" value="C:membrane"/>
    <property type="evidence" value="ECO:0007669"/>
    <property type="project" value="UniProtKB-UniRule"/>
</dbReference>
<dbReference type="GO" id="GO:0044423">
    <property type="term" value="C:virion component"/>
    <property type="evidence" value="ECO:0007669"/>
    <property type="project" value="UniProtKB-UniRule"/>
</dbReference>
<dbReference type="GO" id="GO:0051117">
    <property type="term" value="F:ATPase binding"/>
    <property type="evidence" value="ECO:0000250"/>
    <property type="project" value="UniProtKB"/>
</dbReference>
<dbReference type="GO" id="GO:0042609">
    <property type="term" value="F:CD4 receptor binding"/>
    <property type="evidence" value="ECO:0000250"/>
    <property type="project" value="UniProtKB"/>
</dbReference>
<dbReference type="GO" id="GO:0005525">
    <property type="term" value="F:GTP binding"/>
    <property type="evidence" value="ECO:0007669"/>
    <property type="project" value="UniProtKB-UniRule"/>
</dbReference>
<dbReference type="GO" id="GO:0042288">
    <property type="term" value="F:MHC class I protein binding"/>
    <property type="evidence" value="ECO:0000250"/>
    <property type="project" value="UniProtKB"/>
</dbReference>
<dbReference type="GO" id="GO:0019901">
    <property type="term" value="F:protein kinase binding"/>
    <property type="evidence" value="ECO:0000250"/>
    <property type="project" value="UniProtKB"/>
</dbReference>
<dbReference type="GO" id="GO:0017124">
    <property type="term" value="F:SH3 domain binding"/>
    <property type="evidence" value="ECO:0007669"/>
    <property type="project" value="UniProtKB-UniRule"/>
</dbReference>
<dbReference type="GO" id="GO:0005102">
    <property type="term" value="F:signaling receptor binding"/>
    <property type="evidence" value="ECO:0000250"/>
    <property type="project" value="UniProtKB"/>
</dbReference>
<dbReference type="GO" id="GO:0031996">
    <property type="term" value="F:thioesterase binding"/>
    <property type="evidence" value="ECO:0000250"/>
    <property type="project" value="UniProtKB"/>
</dbReference>
<dbReference type="GO" id="GO:0010561">
    <property type="term" value="P:negative regulation of glycoprotein biosynthetic process"/>
    <property type="evidence" value="ECO:0000250"/>
    <property type="project" value="UniProtKB"/>
</dbReference>
<dbReference type="GO" id="GO:0050848">
    <property type="term" value="P:regulation of calcium-mediated signaling"/>
    <property type="evidence" value="ECO:0000250"/>
    <property type="project" value="UniProtKB"/>
</dbReference>
<dbReference type="GO" id="GO:0046776">
    <property type="term" value="P:symbiont-mediated suppression of host antigen processing and presentation of peptide antigen via MHC class I"/>
    <property type="evidence" value="ECO:0000250"/>
    <property type="project" value="UniProtKB"/>
</dbReference>
<dbReference type="GO" id="GO:0039505">
    <property type="term" value="P:symbiont-mediated suppression of host antigen processing and presentation of peptide antigen via MHC class II"/>
    <property type="evidence" value="ECO:0007669"/>
    <property type="project" value="UniProtKB-UniRule"/>
</dbReference>
<dbReference type="GO" id="GO:0033668">
    <property type="term" value="P:symbiont-mediated suppression of host apoptosis"/>
    <property type="evidence" value="ECO:0000250"/>
    <property type="project" value="UniProtKB"/>
</dbReference>
<dbReference type="GO" id="GO:0140321">
    <property type="term" value="P:symbiont-mediated suppression of host autophagy"/>
    <property type="evidence" value="ECO:0007669"/>
    <property type="project" value="UniProtKB-KW"/>
</dbReference>
<dbReference type="GO" id="GO:0052170">
    <property type="term" value="P:symbiont-mediated suppression of host innate immune response"/>
    <property type="evidence" value="ECO:0000250"/>
    <property type="project" value="UniProtKB"/>
</dbReference>
<dbReference type="GO" id="GO:0019058">
    <property type="term" value="P:viral life cycle"/>
    <property type="evidence" value="ECO:0000250"/>
    <property type="project" value="UniProtKB"/>
</dbReference>
<dbReference type="DisProt" id="DP00189"/>
<dbReference type="FunFam" id="3.30.62.10:FF:000001">
    <property type="entry name" value="Protein Nef"/>
    <property type="match status" value="1"/>
</dbReference>
<dbReference type="FunFam" id="4.10.890.10:FF:000001">
    <property type="entry name" value="Protein Nef"/>
    <property type="match status" value="1"/>
</dbReference>
<dbReference type="Gene3D" id="4.10.890.10">
    <property type="entry name" value="HIV 1 nef anchor domain"/>
    <property type="match status" value="1"/>
</dbReference>
<dbReference type="Gene3D" id="3.30.62.10">
    <property type="entry name" value="Nef Regulatory Factor"/>
    <property type="match status" value="1"/>
</dbReference>
<dbReference type="HAMAP" id="MF_04078">
    <property type="entry name" value="NEF_HIV"/>
    <property type="match status" value="1"/>
</dbReference>
<dbReference type="InterPro" id="IPR027480">
    <property type="entry name" value="HIV-1_Nef_anchor_sf"/>
</dbReference>
<dbReference type="InterPro" id="IPR027481">
    <property type="entry name" value="HIV-1_Nef_core_sf"/>
</dbReference>
<dbReference type="InterPro" id="IPR001558">
    <property type="entry name" value="HIV_Nef"/>
</dbReference>
<dbReference type="Pfam" id="PF00469">
    <property type="entry name" value="F-protein"/>
    <property type="match status" value="1"/>
</dbReference>
<dbReference type="SUPFAM" id="SSF55671">
    <property type="entry name" value="Regulatory factor Nef"/>
    <property type="match status" value="1"/>
</dbReference>
<reference key="1">
    <citation type="journal article" date="1986" name="Proc. Natl. Acad. Sci. U.S.A.">
        <title>Three novel genes of human T-lymphotropic virus type III: immune reactivity of their products with sera from acquired immune deficiency syndrome patients.</title>
        <authorList>
            <person name="Arya S.K."/>
            <person name="Gallo R.C."/>
        </authorList>
    </citation>
    <scope>NUCLEOTIDE SEQUENCE [GENOMIC RNA]</scope>
</reference>
<reference key="2">
    <citation type="journal article" date="1997" name="Biochemistry">
        <title>Solution structure of a polypeptide from the N-terminus of the HIV protein Nef.</title>
        <authorList>
            <person name="Barnham K.J."/>
            <person name="Monks S.A."/>
            <person name="Hinds M.G."/>
            <person name="Azad A.A."/>
            <person name="Norton R.S."/>
        </authorList>
    </citation>
    <scope>STRUCTURE BY NMR OF 1-25</scope>
</reference>
<sequence length="206" mass="23366">MGGKWSKSSVVGWPAVRERMRRAEPAADGVGAASRDLEKHGAITSSNTAANNAACAWLEAQEEEKVGFPVTPQVPLRPMTYKAAVDLSHFLKEKGGLEGLIHSQRRQDILDLWIYHTQGYFPDWQNYTPGPGIRYPLTFGWCYKLVPVEPEKLEEANKGENTSLLHPVSLHGMDDPEREVLEWRFDSRLAFHHVARELHPEYFKNC</sequence>
<name>NEF_HV112</name>
<evidence type="ECO:0000255" key="1">
    <source>
        <dbReference type="HAMAP-Rule" id="MF_04078"/>
    </source>
</evidence>
<evidence type="ECO:0007829" key="2">
    <source>
        <dbReference type="PDB" id="1QA4"/>
    </source>
</evidence>
<evidence type="ECO:0007829" key="3">
    <source>
        <dbReference type="PDB" id="1QA5"/>
    </source>
</evidence>
<feature type="initiator methionine" description="Removed; by host" evidence="1">
    <location>
        <position position="1"/>
    </location>
</feature>
<feature type="chain" id="PRO_0000038321" description="Protein Nef" evidence="1">
    <location>
        <begin position="2"/>
        <end position="206"/>
    </location>
</feature>
<feature type="chain" id="PRO_0000038322" description="C-terminal core protein" evidence="1">
    <location>
        <begin position="58"/>
        <end position="206"/>
    </location>
</feature>
<feature type="region of interest" description="Acidic; interacts with host PACS1 and PACS2; stabilizes the interaction of NEF/MHC-I with host AP1M1; necessary for MHC-I internalization" evidence="1">
    <location>
        <begin position="62"/>
        <end position="65"/>
    </location>
</feature>
<feature type="region of interest" description="SH3-binding; interaction with Src family tyrosine kinases" evidence="1">
    <location>
        <begin position="69"/>
        <end position="78"/>
    </location>
</feature>
<feature type="region of interest" description="Mediates dimerization, Nef-PTE1 interaction" evidence="1">
    <location>
        <begin position="108"/>
        <end position="124"/>
    </location>
</feature>
<feature type="region of interest" description="Binding to ATP6V1H" evidence="1">
    <location>
        <begin position="148"/>
        <end position="180"/>
    </location>
</feature>
<feature type="short sequence motif" description="PxxP; stabilizes the interaction of NEF/MHC-I with host AP1M1; necessary for MHC-I internalization" evidence="1">
    <location>
        <begin position="72"/>
        <end position="75"/>
    </location>
</feature>
<feature type="short sequence motif" description="Dileucine internalization motif; necessary for CD4 internalization" evidence="1">
    <location>
        <begin position="164"/>
        <end position="165"/>
    </location>
</feature>
<feature type="short sequence motif" description="Diacidic; necessary for CD4 internalization" evidence="1">
    <location>
        <begin position="174"/>
        <end position="175"/>
    </location>
</feature>
<feature type="site" description="Might play a role in AP-1 recruitment to the Nef-MHC-I complex" evidence="1">
    <location>
        <position position="20"/>
    </location>
</feature>
<feature type="site" description="Cleavage; by viral protease" evidence="1">
    <location>
        <begin position="57"/>
        <end position="58"/>
    </location>
</feature>
<feature type="modified residue" description="Phosphoserine; by host" evidence="1">
    <location>
        <position position="6"/>
    </location>
</feature>
<feature type="lipid moiety-binding region" description="N-myristoyl glycine; by host" evidence="1">
    <location>
        <position position="2"/>
    </location>
</feature>
<feature type="helix" evidence="3">
    <location>
        <begin position="16"/>
        <end position="20"/>
    </location>
</feature>
<feature type="helix" evidence="2">
    <location>
        <begin position="35"/>
        <end position="41"/>
    </location>
</feature>
<feature type="strand" evidence="3">
    <location>
        <begin position="49"/>
        <end position="52"/>
    </location>
</feature>